<protein>
    <recommendedName>
        <fullName>Lymna-DF-amide 3</fullName>
    </recommendedName>
</protein>
<sequence length="13" mass="1462">PYDRISGSAFSDF</sequence>
<keyword id="KW-0027">Amidation</keyword>
<keyword id="KW-0903">Direct protein sequencing</keyword>
<keyword id="KW-0527">Neuropeptide</keyword>
<keyword id="KW-0964">Secreted</keyword>
<organism>
    <name type="scientific">Lymnaea stagnalis</name>
    <name type="common">Great pond snail</name>
    <name type="synonym">Helix stagnalis</name>
    <dbReference type="NCBI Taxonomy" id="6523"/>
    <lineage>
        <taxon>Eukaryota</taxon>
        <taxon>Metazoa</taxon>
        <taxon>Spiralia</taxon>
        <taxon>Lophotrochozoa</taxon>
        <taxon>Mollusca</taxon>
        <taxon>Gastropoda</taxon>
        <taxon>Heterobranchia</taxon>
        <taxon>Euthyneura</taxon>
        <taxon>Panpulmonata</taxon>
        <taxon>Hygrophila</taxon>
        <taxon>Lymnaeoidea</taxon>
        <taxon>Lymnaeidae</taxon>
        <taxon>Lymnaea</taxon>
    </lineage>
</organism>
<name>DFAM3_LYMST</name>
<dbReference type="PIR" id="S32473">
    <property type="entry name" value="S32473"/>
</dbReference>
<dbReference type="GO" id="GO:0005576">
    <property type="term" value="C:extracellular region"/>
    <property type="evidence" value="ECO:0007669"/>
    <property type="project" value="UniProtKB-SubCell"/>
</dbReference>
<dbReference type="GO" id="GO:0007218">
    <property type="term" value="P:neuropeptide signaling pathway"/>
    <property type="evidence" value="ECO:0007669"/>
    <property type="project" value="UniProtKB-KW"/>
</dbReference>
<feature type="peptide" id="PRO_0000043904" description="Lymna-DF-amide 3">
    <location>
        <begin position="1"/>
        <end position="13"/>
    </location>
</feature>
<feature type="modified residue" description="Phenylalanine amide" evidence="1">
    <location>
        <position position="13"/>
    </location>
</feature>
<feature type="unsure residue">
    <location>
        <position position="12"/>
    </location>
</feature>
<comment type="subcellular location">
    <subcellularLocation>
        <location>Secreted</location>
    </subcellularLocation>
</comment>
<accession>P80180</accession>
<proteinExistence type="evidence at protein level"/>
<reference key="1">
    <citation type="journal article" date="1993" name="Eur. J. Biochem.">
        <title>LymnaDFamides, a new family of neuropeptides from the pond snail, Lymnaea stagnalis. Clue to cholecystokinin immunoreactivity in invertebrates?</title>
        <authorList>
            <person name="Johnsen A.H."/>
            <person name="Rehfeld J.F."/>
        </authorList>
    </citation>
    <scope>PROTEIN SEQUENCE</scope>
    <scope>AMIDATION AT PHE-13</scope>
    <source>
        <tissue>Ganglion</tissue>
    </source>
</reference>
<evidence type="ECO:0000269" key="1">
    <source>
    </source>
</evidence>